<dbReference type="EMBL" id="M64381">
    <property type="protein sequence ID" value="AAA41744.1"/>
    <property type="molecule type" value="mRNA"/>
</dbReference>
<dbReference type="PIR" id="D23701">
    <property type="entry name" value="D23701"/>
</dbReference>
<dbReference type="RefSeq" id="NP_775457.1">
    <property type="nucleotide sequence ID" value="NM_173335.1"/>
</dbReference>
<dbReference type="FunCoup" id="P23268">
    <property type="interactions" value="1004"/>
</dbReference>
<dbReference type="STRING" id="10116.ENSRNOP00000075335"/>
<dbReference type="GlyCosmos" id="P23268">
    <property type="glycosylation" value="1 site, No reported glycans"/>
</dbReference>
<dbReference type="GlyGen" id="P23268">
    <property type="glycosylation" value="1 site"/>
</dbReference>
<dbReference type="PaxDb" id="10116-ENSRNOP00000049068"/>
<dbReference type="GeneID" id="287002"/>
<dbReference type="KEGG" id="rno:287002"/>
<dbReference type="UCSC" id="RGD:727865">
    <property type="organism name" value="rat"/>
</dbReference>
<dbReference type="AGR" id="RGD:1333044"/>
<dbReference type="AGR" id="RGD:1333801"/>
<dbReference type="AGR" id="RGD:727865"/>
<dbReference type="CTD" id="287002"/>
<dbReference type="RGD" id="727865">
    <property type="gene designation" value="Olr1082"/>
</dbReference>
<dbReference type="eggNOG" id="ENOG502RTYS">
    <property type="taxonomic scope" value="Eukaryota"/>
</dbReference>
<dbReference type="InParanoid" id="P23268"/>
<dbReference type="PhylomeDB" id="P23268"/>
<dbReference type="PRO" id="PR:P23268"/>
<dbReference type="Proteomes" id="UP000002494">
    <property type="component" value="Unplaced"/>
</dbReference>
<dbReference type="GO" id="GO:0005886">
    <property type="term" value="C:plasma membrane"/>
    <property type="evidence" value="ECO:0000318"/>
    <property type="project" value="GO_Central"/>
</dbReference>
<dbReference type="GO" id="GO:0004930">
    <property type="term" value="F:G protein-coupled receptor activity"/>
    <property type="evidence" value="ECO:0007669"/>
    <property type="project" value="UniProtKB-KW"/>
</dbReference>
<dbReference type="GO" id="GO:0004984">
    <property type="term" value="F:olfactory receptor activity"/>
    <property type="evidence" value="ECO:0000318"/>
    <property type="project" value="GO_Central"/>
</dbReference>
<dbReference type="GO" id="GO:0007165">
    <property type="term" value="P:signal transduction"/>
    <property type="evidence" value="ECO:0000318"/>
    <property type="project" value="GO_Central"/>
</dbReference>
<dbReference type="CDD" id="cd15234">
    <property type="entry name" value="7tmA_OR7-like"/>
    <property type="match status" value="1"/>
</dbReference>
<dbReference type="FunFam" id="1.20.1070.10:FF:000009">
    <property type="entry name" value="Olfactory receptor"/>
    <property type="match status" value="1"/>
</dbReference>
<dbReference type="Gene3D" id="1.20.1070.10">
    <property type="entry name" value="Rhodopsin 7-helix transmembrane proteins"/>
    <property type="match status" value="1"/>
</dbReference>
<dbReference type="InterPro" id="IPR000276">
    <property type="entry name" value="GPCR_Rhodpsn"/>
</dbReference>
<dbReference type="InterPro" id="IPR017452">
    <property type="entry name" value="GPCR_Rhodpsn_7TM"/>
</dbReference>
<dbReference type="InterPro" id="IPR000725">
    <property type="entry name" value="Olfact_rcpt"/>
</dbReference>
<dbReference type="PANTHER" id="PTHR48001">
    <property type="entry name" value="OLFACTORY RECEPTOR"/>
    <property type="match status" value="1"/>
</dbReference>
<dbReference type="Pfam" id="PF13853">
    <property type="entry name" value="7tm_4"/>
    <property type="match status" value="1"/>
</dbReference>
<dbReference type="PRINTS" id="PR00237">
    <property type="entry name" value="GPCRRHODOPSN"/>
</dbReference>
<dbReference type="PRINTS" id="PR00245">
    <property type="entry name" value="OLFACTORYR"/>
</dbReference>
<dbReference type="SUPFAM" id="SSF81321">
    <property type="entry name" value="Family A G protein-coupled receptor-like"/>
    <property type="match status" value="1"/>
</dbReference>
<dbReference type="PROSITE" id="PS00237">
    <property type="entry name" value="G_PROTEIN_RECEP_F1_1"/>
    <property type="match status" value="1"/>
</dbReference>
<dbReference type="PROSITE" id="PS50262">
    <property type="entry name" value="G_PROTEIN_RECEP_F1_2"/>
    <property type="match status" value="1"/>
</dbReference>
<organism>
    <name type="scientific">Rattus norvegicus</name>
    <name type="common">Rat</name>
    <dbReference type="NCBI Taxonomy" id="10116"/>
    <lineage>
        <taxon>Eukaryota</taxon>
        <taxon>Metazoa</taxon>
        <taxon>Chordata</taxon>
        <taxon>Craniata</taxon>
        <taxon>Vertebrata</taxon>
        <taxon>Euteleostomi</taxon>
        <taxon>Mammalia</taxon>
        <taxon>Eutheria</taxon>
        <taxon>Euarchontoglires</taxon>
        <taxon>Glires</taxon>
        <taxon>Rodentia</taxon>
        <taxon>Myomorpha</taxon>
        <taxon>Muroidea</taxon>
        <taxon>Muridae</taxon>
        <taxon>Murinae</taxon>
        <taxon>Rattus</taxon>
    </lineage>
</organism>
<protein>
    <recommendedName>
        <fullName>Olfactory receptor 1082</fullName>
    </recommendedName>
    <alternativeName>
        <fullName>Olfactory receptor-like protein F12</fullName>
    </alternativeName>
</protein>
<name>O1082_RAT</name>
<keyword id="KW-1003">Cell membrane</keyword>
<keyword id="KW-1015">Disulfide bond</keyword>
<keyword id="KW-0297">G-protein coupled receptor</keyword>
<keyword id="KW-0325">Glycoprotein</keyword>
<keyword id="KW-0472">Membrane</keyword>
<keyword id="KW-0552">Olfaction</keyword>
<keyword id="KW-0675">Receptor</keyword>
<keyword id="KW-1185">Reference proteome</keyword>
<keyword id="KW-0716">Sensory transduction</keyword>
<keyword id="KW-0807">Transducer</keyword>
<keyword id="KW-0812">Transmembrane</keyword>
<keyword id="KW-1133">Transmembrane helix</keyword>
<feature type="chain" id="PRO_0000150873" description="Olfactory receptor 1082">
    <location>
        <begin position="1"/>
        <end position="317"/>
    </location>
</feature>
<feature type="topological domain" description="Extracellular" evidence="1">
    <location>
        <begin position="1"/>
        <end position="26"/>
    </location>
</feature>
<feature type="transmembrane region" description="Helical; Name=1" evidence="1">
    <location>
        <begin position="27"/>
        <end position="51"/>
    </location>
</feature>
<feature type="topological domain" description="Cytoplasmic" evidence="1">
    <location>
        <begin position="52"/>
        <end position="58"/>
    </location>
</feature>
<feature type="transmembrane region" description="Helical; Name=2" evidence="1">
    <location>
        <begin position="59"/>
        <end position="80"/>
    </location>
</feature>
<feature type="topological domain" description="Extracellular" evidence="1">
    <location>
        <begin position="81"/>
        <end position="101"/>
    </location>
</feature>
<feature type="transmembrane region" description="Helical; Name=3" evidence="1">
    <location>
        <begin position="102"/>
        <end position="121"/>
    </location>
</feature>
<feature type="topological domain" description="Cytoplasmic" evidence="1">
    <location>
        <begin position="122"/>
        <end position="140"/>
    </location>
</feature>
<feature type="transmembrane region" description="Helical; Name=4" evidence="1">
    <location>
        <begin position="141"/>
        <end position="159"/>
    </location>
</feature>
<feature type="topological domain" description="Extracellular" evidence="1">
    <location>
        <begin position="160"/>
        <end position="197"/>
    </location>
</feature>
<feature type="transmembrane region" description="Helical; Name=5" evidence="1">
    <location>
        <begin position="198"/>
        <end position="220"/>
    </location>
</feature>
<feature type="topological domain" description="Cytoplasmic" evidence="1">
    <location>
        <begin position="221"/>
        <end position="237"/>
    </location>
</feature>
<feature type="transmembrane region" description="Helical; Name=6" evidence="1">
    <location>
        <begin position="238"/>
        <end position="261"/>
    </location>
</feature>
<feature type="topological domain" description="Extracellular" evidence="1">
    <location>
        <begin position="262"/>
        <end position="273"/>
    </location>
</feature>
<feature type="transmembrane region" description="Helical; Name=7" evidence="1">
    <location>
        <begin position="274"/>
        <end position="293"/>
    </location>
</feature>
<feature type="topological domain" description="Cytoplasmic" evidence="1">
    <location>
        <begin position="294"/>
        <end position="317"/>
    </location>
</feature>
<feature type="glycosylation site" description="N-linked (GlcNAc...) asparagine" evidence="1">
    <location>
        <position position="5"/>
    </location>
</feature>
<feature type="disulfide bond" evidence="2">
    <location>
        <begin position="98"/>
        <end position="190"/>
    </location>
</feature>
<gene>
    <name type="primary">Olr1082</name>
</gene>
<proteinExistence type="evidence at transcript level"/>
<reference key="1">
    <citation type="journal article" date="1991" name="Cell">
        <title>A novel multigene family may encode odorant receptors: a molecular basis for odor recognition.</title>
        <authorList>
            <person name="Buck L."/>
            <person name="Axel R."/>
        </authorList>
    </citation>
    <scope>NUCLEOTIDE SEQUENCE [MRNA]</scope>
</reference>
<evidence type="ECO:0000255" key="1"/>
<evidence type="ECO:0000255" key="2">
    <source>
        <dbReference type="PROSITE-ProRule" id="PRU00521"/>
    </source>
</evidence>
<evidence type="ECO:0000305" key="3"/>
<comment type="function">
    <text evidence="3">Odorant receptor.</text>
</comment>
<comment type="subcellular location">
    <subcellularLocation>
        <location>Cell membrane</location>
        <topology>Multi-pass membrane protein</topology>
    </subcellularLocation>
</comment>
<comment type="tissue specificity">
    <text>Olfactory epithelium.</text>
</comment>
<comment type="similarity">
    <text evidence="2">Belongs to the G-protein coupled receptor 1 family.</text>
</comment>
<accession>P23268</accession>
<sequence>MESGNSTRRFSSFFLLGFTENPQLHFLIFALFLSMYLVTVLGNLLIIMAIITQSHLHTPMYFFLANLSFVDICFTSTTIPKMLVNIYTQSKSITYEDCISQMCVFLVFAELGNFLLAVMAYDRYVAXCHPLCYTVIVNHRLCILLLLLSWVISIFHAFIQSLIVLQLTFCGDVKIPHFFCELNQLSQLTCSDNFPSHLIMNLVPVMLAAISFSGILYSYFKIVSSIHSISTVQGKYKAFSTCASHLSIVSLFYSTGLGVYVSSAVVQSSHSAASASVMYTVVTPMLNPFIYSLRNKDVKRALERLLEGNCKVHHWTG</sequence>